<reference key="1">
    <citation type="journal article" date="2005" name="Nucleic Acids Res.">
        <title>Genome dynamics and diversity of Shigella species, the etiologic agents of bacillary dysentery.</title>
        <authorList>
            <person name="Yang F."/>
            <person name="Yang J."/>
            <person name="Zhang X."/>
            <person name="Chen L."/>
            <person name="Jiang Y."/>
            <person name="Yan Y."/>
            <person name="Tang X."/>
            <person name="Wang J."/>
            <person name="Xiong Z."/>
            <person name="Dong J."/>
            <person name="Xue Y."/>
            <person name="Zhu Y."/>
            <person name="Xu X."/>
            <person name="Sun L."/>
            <person name="Chen S."/>
            <person name="Nie H."/>
            <person name="Peng J."/>
            <person name="Xu J."/>
            <person name="Wang Y."/>
            <person name="Yuan Z."/>
            <person name="Wen Y."/>
            <person name="Yao Z."/>
            <person name="Shen Y."/>
            <person name="Qiang B."/>
            <person name="Hou Y."/>
            <person name="Yu J."/>
            <person name="Jin Q."/>
        </authorList>
    </citation>
    <scope>NUCLEOTIDE SEQUENCE [LARGE SCALE GENOMIC DNA]</scope>
    <source>
        <strain>Sd197</strain>
    </source>
</reference>
<dbReference type="EC" id="2.7.8.26" evidence="1"/>
<dbReference type="EMBL" id="CP000034">
    <property type="protein sequence ID" value="ABB62324.1"/>
    <property type="molecule type" value="Genomic_DNA"/>
</dbReference>
<dbReference type="RefSeq" id="WP_005021725.1">
    <property type="nucleotide sequence ID" value="NC_007606.1"/>
</dbReference>
<dbReference type="RefSeq" id="YP_403815.1">
    <property type="nucleotide sequence ID" value="NC_007606.1"/>
</dbReference>
<dbReference type="STRING" id="300267.SDY_2241"/>
<dbReference type="EnsemblBacteria" id="ABB62324">
    <property type="protein sequence ID" value="ABB62324"/>
    <property type="gene ID" value="SDY_2241"/>
</dbReference>
<dbReference type="KEGG" id="sdy:SDY_2241"/>
<dbReference type="PATRIC" id="fig|300267.13.peg.2711"/>
<dbReference type="HOGENOM" id="CLU_057426_1_1_6"/>
<dbReference type="UniPathway" id="UPA00148">
    <property type="reaction ID" value="UER00238"/>
</dbReference>
<dbReference type="Proteomes" id="UP000002716">
    <property type="component" value="Chromosome"/>
</dbReference>
<dbReference type="GO" id="GO:0005886">
    <property type="term" value="C:plasma membrane"/>
    <property type="evidence" value="ECO:0007669"/>
    <property type="project" value="UniProtKB-SubCell"/>
</dbReference>
<dbReference type="GO" id="GO:0051073">
    <property type="term" value="F:adenosylcobinamide-GDP ribazoletransferase activity"/>
    <property type="evidence" value="ECO:0007669"/>
    <property type="project" value="UniProtKB-UniRule"/>
</dbReference>
<dbReference type="GO" id="GO:0008818">
    <property type="term" value="F:cobalamin 5'-phosphate synthase activity"/>
    <property type="evidence" value="ECO:0007669"/>
    <property type="project" value="UniProtKB-UniRule"/>
</dbReference>
<dbReference type="GO" id="GO:0009236">
    <property type="term" value="P:cobalamin biosynthetic process"/>
    <property type="evidence" value="ECO:0007669"/>
    <property type="project" value="UniProtKB-UniRule"/>
</dbReference>
<dbReference type="HAMAP" id="MF_00719">
    <property type="entry name" value="CobS"/>
    <property type="match status" value="1"/>
</dbReference>
<dbReference type="InterPro" id="IPR003805">
    <property type="entry name" value="CobS"/>
</dbReference>
<dbReference type="NCBIfam" id="TIGR00317">
    <property type="entry name" value="cobS"/>
    <property type="match status" value="1"/>
</dbReference>
<dbReference type="PANTHER" id="PTHR34148">
    <property type="entry name" value="ADENOSYLCOBINAMIDE-GDP RIBAZOLETRANSFERASE"/>
    <property type="match status" value="1"/>
</dbReference>
<dbReference type="PANTHER" id="PTHR34148:SF1">
    <property type="entry name" value="ADENOSYLCOBINAMIDE-GDP RIBAZOLETRANSFERASE"/>
    <property type="match status" value="1"/>
</dbReference>
<dbReference type="Pfam" id="PF02654">
    <property type="entry name" value="CobS"/>
    <property type="match status" value="1"/>
</dbReference>
<organism>
    <name type="scientific">Shigella dysenteriae serotype 1 (strain Sd197)</name>
    <dbReference type="NCBI Taxonomy" id="300267"/>
    <lineage>
        <taxon>Bacteria</taxon>
        <taxon>Pseudomonadati</taxon>
        <taxon>Pseudomonadota</taxon>
        <taxon>Gammaproteobacteria</taxon>
        <taxon>Enterobacterales</taxon>
        <taxon>Enterobacteriaceae</taxon>
        <taxon>Shigella</taxon>
    </lineage>
</organism>
<protein>
    <recommendedName>
        <fullName evidence="1">Adenosylcobinamide-GDP ribazoletransferase</fullName>
        <ecNumber evidence="1">2.7.8.26</ecNumber>
    </recommendedName>
    <alternativeName>
        <fullName evidence="1">Cobalamin synthase</fullName>
    </alternativeName>
    <alternativeName>
        <fullName evidence="1">Cobalamin-5'-phosphate synthase</fullName>
    </alternativeName>
</protein>
<gene>
    <name evidence="1" type="primary">cobS</name>
    <name type="ordered locus">SDY_2241</name>
</gene>
<name>COBS_SHIDS</name>
<proteinExistence type="inferred from homology"/>
<evidence type="ECO:0000255" key="1">
    <source>
        <dbReference type="HAMAP-Rule" id="MF_00719"/>
    </source>
</evidence>
<feature type="chain" id="PRO_1000045812" description="Adenosylcobinamide-GDP ribazoletransferase">
    <location>
        <begin position="1"/>
        <end position="247"/>
    </location>
</feature>
<feature type="transmembrane region" description="Helical" evidence="1">
    <location>
        <begin position="34"/>
        <end position="54"/>
    </location>
</feature>
<feature type="transmembrane region" description="Helical" evidence="1">
    <location>
        <begin position="59"/>
        <end position="79"/>
    </location>
</feature>
<feature type="transmembrane region" description="Helical" evidence="1">
    <location>
        <begin position="113"/>
        <end position="133"/>
    </location>
</feature>
<feature type="transmembrane region" description="Helical" evidence="1">
    <location>
        <begin position="138"/>
        <end position="158"/>
    </location>
</feature>
<feature type="transmembrane region" description="Helical" evidence="1">
    <location>
        <begin position="194"/>
        <end position="214"/>
    </location>
</feature>
<sequence length="247" mass="26408">MSKLFWAMLSFITRLPVPRRWSQGLDFEHYSRGIITFPLIGLLLGAISGLVFMVLQAWCGVPLAALFSVLVLALMTGGFHLDGLADTCDGVFSARSRDRMLEIMRDSRLGTHGGLALIFVVLAKILVLSELALRGEPILASLAAACAVSRGIAALLMYRHRYAREEGLGNVFIGKIDGRQTCVTLGLAAIFAAVLLPGMHGVAAMVVTMVAIFILGQLLKRTLGGQTGDTLGAAIELGELVFLLALL</sequence>
<accession>Q32ED1</accession>
<keyword id="KW-0997">Cell inner membrane</keyword>
<keyword id="KW-1003">Cell membrane</keyword>
<keyword id="KW-0169">Cobalamin biosynthesis</keyword>
<keyword id="KW-0460">Magnesium</keyword>
<keyword id="KW-0472">Membrane</keyword>
<keyword id="KW-1185">Reference proteome</keyword>
<keyword id="KW-0808">Transferase</keyword>
<keyword id="KW-0812">Transmembrane</keyword>
<keyword id="KW-1133">Transmembrane helix</keyword>
<comment type="function">
    <text evidence="1">Joins adenosylcobinamide-GDP and alpha-ribazole to generate adenosylcobalamin (Ado-cobalamin). Also synthesizes adenosylcobalamin 5'-phosphate from adenosylcobinamide-GDP and alpha-ribazole 5'-phosphate.</text>
</comment>
<comment type="catalytic activity">
    <reaction evidence="1">
        <text>alpha-ribazole + adenosylcob(III)inamide-GDP = adenosylcob(III)alamin + GMP + H(+)</text>
        <dbReference type="Rhea" id="RHEA:16049"/>
        <dbReference type="ChEBI" id="CHEBI:10329"/>
        <dbReference type="ChEBI" id="CHEBI:15378"/>
        <dbReference type="ChEBI" id="CHEBI:18408"/>
        <dbReference type="ChEBI" id="CHEBI:58115"/>
        <dbReference type="ChEBI" id="CHEBI:60487"/>
        <dbReference type="EC" id="2.7.8.26"/>
    </reaction>
</comment>
<comment type="catalytic activity">
    <reaction evidence="1">
        <text>alpha-ribazole 5'-phosphate + adenosylcob(III)inamide-GDP = adenosylcob(III)alamin 5'-phosphate + GMP + H(+)</text>
        <dbReference type="Rhea" id="RHEA:23560"/>
        <dbReference type="ChEBI" id="CHEBI:15378"/>
        <dbReference type="ChEBI" id="CHEBI:57918"/>
        <dbReference type="ChEBI" id="CHEBI:58115"/>
        <dbReference type="ChEBI" id="CHEBI:60487"/>
        <dbReference type="ChEBI" id="CHEBI:60493"/>
        <dbReference type="EC" id="2.7.8.26"/>
    </reaction>
</comment>
<comment type="cofactor">
    <cofactor evidence="1">
        <name>Mg(2+)</name>
        <dbReference type="ChEBI" id="CHEBI:18420"/>
    </cofactor>
</comment>
<comment type="pathway">
    <text evidence="1">Cofactor biosynthesis; adenosylcobalamin biosynthesis; adenosylcobalamin from cob(II)yrinate a,c-diamide: step 7/7.</text>
</comment>
<comment type="subcellular location">
    <subcellularLocation>
        <location evidence="1">Cell inner membrane</location>
        <topology evidence="1">Multi-pass membrane protein</topology>
    </subcellularLocation>
</comment>
<comment type="similarity">
    <text evidence="1">Belongs to the CobS family.</text>
</comment>